<comment type="function">
    <text evidence="1">Catalyzes the hydrolytic cleavage of the carbon-nitrogen bond in imidazolone-5-propanoate to yield N-formimidoyl-L-glutamate. It is the third step in the universal histidine degradation pathway.</text>
</comment>
<comment type="catalytic activity">
    <reaction evidence="1">
        <text>4-imidazolone-5-propanoate + H2O = N-formimidoyl-L-glutamate</text>
        <dbReference type="Rhea" id="RHEA:23660"/>
        <dbReference type="ChEBI" id="CHEBI:15377"/>
        <dbReference type="ChEBI" id="CHEBI:58928"/>
        <dbReference type="ChEBI" id="CHEBI:77893"/>
        <dbReference type="EC" id="3.5.2.7"/>
    </reaction>
</comment>
<comment type="cofactor">
    <cofactor evidence="1">
        <name>Zn(2+)</name>
        <dbReference type="ChEBI" id="CHEBI:29105"/>
    </cofactor>
    <cofactor evidence="1">
        <name>Fe(3+)</name>
        <dbReference type="ChEBI" id="CHEBI:29034"/>
    </cofactor>
    <text evidence="1">Binds 1 zinc or iron ion per subunit.</text>
</comment>
<comment type="pathway">
    <text evidence="1">Amino-acid degradation; L-histidine degradation into L-glutamate; N-formimidoyl-L-glutamate from L-histidine: step 3/3.</text>
</comment>
<comment type="subcellular location">
    <subcellularLocation>
        <location evidence="1">Cytoplasm</location>
    </subcellularLocation>
</comment>
<comment type="similarity">
    <text evidence="1">Belongs to the metallo-dependent hydrolases superfamily. HutI family.</text>
</comment>
<reference key="1">
    <citation type="submission" date="2007-10" db="EMBL/GenBank/DDBJ databases">
        <title>Complete sequence of Salinispora arenicola CNS-205.</title>
        <authorList>
            <consortium name="US DOE Joint Genome Institute"/>
            <person name="Copeland A."/>
            <person name="Lucas S."/>
            <person name="Lapidus A."/>
            <person name="Barry K."/>
            <person name="Glavina del Rio T."/>
            <person name="Dalin E."/>
            <person name="Tice H."/>
            <person name="Pitluck S."/>
            <person name="Foster B."/>
            <person name="Schmutz J."/>
            <person name="Larimer F."/>
            <person name="Land M."/>
            <person name="Hauser L."/>
            <person name="Kyrpides N."/>
            <person name="Ivanova N."/>
            <person name="Jensen P.R."/>
            <person name="Moore B.S."/>
            <person name="Penn K."/>
            <person name="Jenkins C."/>
            <person name="Udwary D."/>
            <person name="Xiang L."/>
            <person name="Gontang E."/>
            <person name="Richardson P."/>
        </authorList>
    </citation>
    <scope>NUCLEOTIDE SEQUENCE [LARGE SCALE GENOMIC DNA]</scope>
    <source>
        <strain>CNS-205</strain>
    </source>
</reference>
<feature type="chain" id="PRO_1000079824" description="Imidazolonepropionase">
    <location>
        <begin position="1"/>
        <end position="392"/>
    </location>
</feature>
<feature type="binding site" evidence="1">
    <location>
        <position position="69"/>
    </location>
    <ligand>
        <name>Fe(3+)</name>
        <dbReference type="ChEBI" id="CHEBI:29034"/>
    </ligand>
</feature>
<feature type="binding site" evidence="1">
    <location>
        <position position="69"/>
    </location>
    <ligand>
        <name>Zn(2+)</name>
        <dbReference type="ChEBI" id="CHEBI:29105"/>
    </ligand>
</feature>
<feature type="binding site" evidence="1">
    <location>
        <position position="71"/>
    </location>
    <ligand>
        <name>Fe(3+)</name>
        <dbReference type="ChEBI" id="CHEBI:29034"/>
    </ligand>
</feature>
<feature type="binding site" evidence="1">
    <location>
        <position position="71"/>
    </location>
    <ligand>
        <name>Zn(2+)</name>
        <dbReference type="ChEBI" id="CHEBI:29105"/>
    </ligand>
</feature>
<feature type="binding site" evidence="1">
    <location>
        <position position="78"/>
    </location>
    <ligand>
        <name>4-imidazolone-5-propanoate</name>
        <dbReference type="ChEBI" id="CHEBI:77893"/>
    </ligand>
</feature>
<feature type="binding site" evidence="1">
    <location>
        <position position="136"/>
    </location>
    <ligand>
        <name>4-imidazolone-5-propanoate</name>
        <dbReference type="ChEBI" id="CHEBI:77893"/>
    </ligand>
</feature>
<feature type="binding site" evidence="1">
    <location>
        <position position="136"/>
    </location>
    <ligand>
        <name>N-formimidoyl-L-glutamate</name>
        <dbReference type="ChEBI" id="CHEBI:58928"/>
    </ligand>
</feature>
<feature type="binding site" evidence="1">
    <location>
        <position position="163"/>
    </location>
    <ligand>
        <name>4-imidazolone-5-propanoate</name>
        <dbReference type="ChEBI" id="CHEBI:77893"/>
    </ligand>
</feature>
<feature type="binding site" evidence="1">
    <location>
        <position position="226"/>
    </location>
    <ligand>
        <name>Fe(3+)</name>
        <dbReference type="ChEBI" id="CHEBI:29034"/>
    </ligand>
</feature>
<feature type="binding site" evidence="1">
    <location>
        <position position="226"/>
    </location>
    <ligand>
        <name>Zn(2+)</name>
        <dbReference type="ChEBI" id="CHEBI:29105"/>
    </ligand>
</feature>
<feature type="binding site" evidence="1">
    <location>
        <position position="229"/>
    </location>
    <ligand>
        <name>4-imidazolone-5-propanoate</name>
        <dbReference type="ChEBI" id="CHEBI:77893"/>
    </ligand>
</feature>
<feature type="binding site" evidence="1">
    <location>
        <position position="302"/>
    </location>
    <ligand>
        <name>Fe(3+)</name>
        <dbReference type="ChEBI" id="CHEBI:29034"/>
    </ligand>
</feature>
<feature type="binding site" evidence="1">
    <location>
        <position position="302"/>
    </location>
    <ligand>
        <name>Zn(2+)</name>
        <dbReference type="ChEBI" id="CHEBI:29105"/>
    </ligand>
</feature>
<feature type="binding site" evidence="1">
    <location>
        <position position="304"/>
    </location>
    <ligand>
        <name>N-formimidoyl-L-glutamate</name>
        <dbReference type="ChEBI" id="CHEBI:58928"/>
    </ligand>
</feature>
<feature type="binding site" evidence="1">
    <location>
        <position position="306"/>
    </location>
    <ligand>
        <name>N-formimidoyl-L-glutamate</name>
        <dbReference type="ChEBI" id="CHEBI:58928"/>
    </ligand>
</feature>
<feature type="binding site" evidence="1">
    <location>
        <position position="307"/>
    </location>
    <ligand>
        <name>4-imidazolone-5-propanoate</name>
        <dbReference type="ChEBI" id="CHEBI:77893"/>
    </ligand>
</feature>
<keyword id="KW-0963">Cytoplasm</keyword>
<keyword id="KW-0369">Histidine metabolism</keyword>
<keyword id="KW-0378">Hydrolase</keyword>
<keyword id="KW-0408">Iron</keyword>
<keyword id="KW-0479">Metal-binding</keyword>
<keyword id="KW-0862">Zinc</keyword>
<gene>
    <name evidence="1" type="primary">hutI</name>
    <name type="ordered locus">Sare_0997</name>
</gene>
<organism>
    <name type="scientific">Salinispora arenicola (strain CNS-205)</name>
    <dbReference type="NCBI Taxonomy" id="391037"/>
    <lineage>
        <taxon>Bacteria</taxon>
        <taxon>Bacillati</taxon>
        <taxon>Actinomycetota</taxon>
        <taxon>Actinomycetes</taxon>
        <taxon>Micromonosporales</taxon>
        <taxon>Micromonosporaceae</taxon>
        <taxon>Salinispora</taxon>
    </lineage>
</organism>
<evidence type="ECO:0000255" key="1">
    <source>
        <dbReference type="HAMAP-Rule" id="MF_00372"/>
    </source>
</evidence>
<protein>
    <recommendedName>
        <fullName evidence="1">Imidazolonepropionase</fullName>
        <ecNumber evidence="1">3.5.2.7</ecNumber>
    </recommendedName>
    <alternativeName>
        <fullName evidence="1">Imidazolone-5-propionate hydrolase</fullName>
    </alternativeName>
</protein>
<name>HUTI_SALAI</name>
<accession>A8M4I4</accession>
<sequence>MSSLLVDNIGELVTNAGAGDGPLGIRRNAAVLVEDGLVAWVGPNRYPPPADRRIDAEGAAVLPGFVDSHAHLVFAGDRAAEFAARMAGEPYTGGGIRTTVGATRAATDDELRATVRRLRGEALRQGTTTVEIKSGYGLTVPDETRSLRLAAEVSEETTFLGAHLVPAEYADRPDDYVGLVCGPMLAAAAPHARWIDVFCERGAFDADHTRAILTCGQAAGLGARLHANQLGPGPGVQLGVELGAASVDHCTHLTDADVDALAGAGGATVATLLPGAEFSTRSPYPDARRLLDAGVTVALATDCNPGSSYTSSMPFCIALAVREMRMSPTEAVWAATAGGAAALRRTDVGQLTPGARADLMILDAPSHLHLAYRPGVPLIRQVLHNGVPQCRP</sequence>
<dbReference type="EC" id="3.5.2.7" evidence="1"/>
<dbReference type="EMBL" id="CP000850">
    <property type="protein sequence ID" value="ABV96908.1"/>
    <property type="molecule type" value="Genomic_DNA"/>
</dbReference>
<dbReference type="SMR" id="A8M4I4"/>
<dbReference type="STRING" id="391037.Sare_0997"/>
<dbReference type="KEGG" id="saq:Sare_0997"/>
<dbReference type="PATRIC" id="fig|391037.6.peg.1013"/>
<dbReference type="eggNOG" id="COG1228">
    <property type="taxonomic scope" value="Bacteria"/>
</dbReference>
<dbReference type="HOGENOM" id="CLU_041647_1_0_11"/>
<dbReference type="OrthoDB" id="9776455at2"/>
<dbReference type="UniPathway" id="UPA00379">
    <property type="reaction ID" value="UER00551"/>
</dbReference>
<dbReference type="GO" id="GO:0005737">
    <property type="term" value="C:cytoplasm"/>
    <property type="evidence" value="ECO:0007669"/>
    <property type="project" value="UniProtKB-SubCell"/>
</dbReference>
<dbReference type="GO" id="GO:0050480">
    <property type="term" value="F:imidazolonepropionase activity"/>
    <property type="evidence" value="ECO:0007669"/>
    <property type="project" value="UniProtKB-UniRule"/>
</dbReference>
<dbReference type="GO" id="GO:0005506">
    <property type="term" value="F:iron ion binding"/>
    <property type="evidence" value="ECO:0007669"/>
    <property type="project" value="UniProtKB-UniRule"/>
</dbReference>
<dbReference type="GO" id="GO:0008270">
    <property type="term" value="F:zinc ion binding"/>
    <property type="evidence" value="ECO:0007669"/>
    <property type="project" value="UniProtKB-UniRule"/>
</dbReference>
<dbReference type="GO" id="GO:0019556">
    <property type="term" value="P:L-histidine catabolic process to glutamate and formamide"/>
    <property type="evidence" value="ECO:0007669"/>
    <property type="project" value="UniProtKB-UniPathway"/>
</dbReference>
<dbReference type="GO" id="GO:0019557">
    <property type="term" value="P:L-histidine catabolic process to glutamate and formate"/>
    <property type="evidence" value="ECO:0007669"/>
    <property type="project" value="UniProtKB-UniPathway"/>
</dbReference>
<dbReference type="Gene3D" id="3.20.20.140">
    <property type="entry name" value="Metal-dependent hydrolases"/>
    <property type="match status" value="1"/>
</dbReference>
<dbReference type="Gene3D" id="2.30.40.10">
    <property type="entry name" value="Urease, subunit C, domain 1"/>
    <property type="match status" value="1"/>
</dbReference>
<dbReference type="HAMAP" id="MF_00372">
    <property type="entry name" value="HutI"/>
    <property type="match status" value="1"/>
</dbReference>
<dbReference type="InterPro" id="IPR006680">
    <property type="entry name" value="Amidohydro-rel"/>
</dbReference>
<dbReference type="InterPro" id="IPR005920">
    <property type="entry name" value="HutI"/>
</dbReference>
<dbReference type="InterPro" id="IPR011059">
    <property type="entry name" value="Metal-dep_hydrolase_composite"/>
</dbReference>
<dbReference type="InterPro" id="IPR032466">
    <property type="entry name" value="Metal_Hydrolase"/>
</dbReference>
<dbReference type="NCBIfam" id="TIGR01224">
    <property type="entry name" value="hutI"/>
    <property type="match status" value="1"/>
</dbReference>
<dbReference type="PANTHER" id="PTHR42752">
    <property type="entry name" value="IMIDAZOLONEPROPIONASE"/>
    <property type="match status" value="1"/>
</dbReference>
<dbReference type="PANTHER" id="PTHR42752:SF1">
    <property type="entry name" value="IMIDAZOLONEPROPIONASE-RELATED"/>
    <property type="match status" value="1"/>
</dbReference>
<dbReference type="Pfam" id="PF01979">
    <property type="entry name" value="Amidohydro_1"/>
    <property type="match status" value="1"/>
</dbReference>
<dbReference type="SUPFAM" id="SSF51338">
    <property type="entry name" value="Composite domain of metallo-dependent hydrolases"/>
    <property type="match status" value="1"/>
</dbReference>
<dbReference type="SUPFAM" id="SSF51556">
    <property type="entry name" value="Metallo-dependent hydrolases"/>
    <property type="match status" value="1"/>
</dbReference>
<proteinExistence type="inferred from homology"/>